<gene>
    <name evidence="1" type="primary">leuS</name>
    <name type="ordered locus">RSc2744</name>
    <name type="ORF">RS00110</name>
</gene>
<dbReference type="EC" id="6.1.1.4" evidence="1"/>
<dbReference type="EMBL" id="AL646052">
    <property type="protein sequence ID" value="CAD16451.1"/>
    <property type="molecule type" value="Genomic_DNA"/>
</dbReference>
<dbReference type="RefSeq" id="WP_011002651.1">
    <property type="nucleotide sequence ID" value="NC_003295.1"/>
</dbReference>
<dbReference type="SMR" id="Q8XVT3"/>
<dbReference type="STRING" id="267608.RSc2744"/>
<dbReference type="EnsemblBacteria" id="CAD16451">
    <property type="protein sequence ID" value="CAD16451"/>
    <property type="gene ID" value="RSc2744"/>
</dbReference>
<dbReference type="KEGG" id="rso:RSc2744"/>
<dbReference type="PATRIC" id="fig|267608.8.peg.2791"/>
<dbReference type="eggNOG" id="COG0495">
    <property type="taxonomic scope" value="Bacteria"/>
</dbReference>
<dbReference type="HOGENOM" id="CLU_004427_0_0_4"/>
<dbReference type="Proteomes" id="UP000001436">
    <property type="component" value="Chromosome"/>
</dbReference>
<dbReference type="GO" id="GO:0005829">
    <property type="term" value="C:cytosol"/>
    <property type="evidence" value="ECO:0007669"/>
    <property type="project" value="TreeGrafter"/>
</dbReference>
<dbReference type="GO" id="GO:0002161">
    <property type="term" value="F:aminoacyl-tRNA deacylase activity"/>
    <property type="evidence" value="ECO:0007669"/>
    <property type="project" value="InterPro"/>
</dbReference>
<dbReference type="GO" id="GO:0005524">
    <property type="term" value="F:ATP binding"/>
    <property type="evidence" value="ECO:0007669"/>
    <property type="project" value="UniProtKB-UniRule"/>
</dbReference>
<dbReference type="GO" id="GO:0004823">
    <property type="term" value="F:leucine-tRNA ligase activity"/>
    <property type="evidence" value="ECO:0007669"/>
    <property type="project" value="UniProtKB-UniRule"/>
</dbReference>
<dbReference type="GO" id="GO:0006429">
    <property type="term" value="P:leucyl-tRNA aminoacylation"/>
    <property type="evidence" value="ECO:0007669"/>
    <property type="project" value="UniProtKB-UniRule"/>
</dbReference>
<dbReference type="CDD" id="cd07958">
    <property type="entry name" value="Anticodon_Ia_Leu_BEm"/>
    <property type="match status" value="1"/>
</dbReference>
<dbReference type="CDD" id="cd00812">
    <property type="entry name" value="LeuRS_core"/>
    <property type="match status" value="1"/>
</dbReference>
<dbReference type="FunFam" id="1.10.730.10:FF:000003">
    <property type="entry name" value="Leucine--tRNA ligase"/>
    <property type="match status" value="1"/>
</dbReference>
<dbReference type="FunFam" id="2.20.28.290:FF:000001">
    <property type="entry name" value="Leucine--tRNA ligase"/>
    <property type="match status" value="1"/>
</dbReference>
<dbReference type="FunFam" id="3.10.20.590:FF:000001">
    <property type="entry name" value="Leucine--tRNA ligase"/>
    <property type="match status" value="1"/>
</dbReference>
<dbReference type="FunFam" id="3.40.50.620:FF:000003">
    <property type="entry name" value="Leucine--tRNA ligase"/>
    <property type="match status" value="1"/>
</dbReference>
<dbReference type="FunFam" id="3.40.50.620:FF:000056">
    <property type="entry name" value="Leucine--tRNA ligase"/>
    <property type="match status" value="1"/>
</dbReference>
<dbReference type="FunFam" id="3.90.740.10:FF:000012">
    <property type="entry name" value="Leucine--tRNA ligase"/>
    <property type="match status" value="1"/>
</dbReference>
<dbReference type="Gene3D" id="2.20.28.290">
    <property type="match status" value="1"/>
</dbReference>
<dbReference type="Gene3D" id="3.10.20.590">
    <property type="match status" value="1"/>
</dbReference>
<dbReference type="Gene3D" id="3.40.50.620">
    <property type="entry name" value="HUPs"/>
    <property type="match status" value="2"/>
</dbReference>
<dbReference type="Gene3D" id="1.10.730.10">
    <property type="entry name" value="Isoleucyl-tRNA Synthetase, Domain 1"/>
    <property type="match status" value="2"/>
</dbReference>
<dbReference type="Gene3D" id="3.90.740.10">
    <property type="entry name" value="Valyl/Leucyl/Isoleucyl-tRNA synthetase, editing domain"/>
    <property type="match status" value="1"/>
</dbReference>
<dbReference type="HAMAP" id="MF_00049_B">
    <property type="entry name" value="Leu_tRNA_synth_B"/>
    <property type="match status" value="1"/>
</dbReference>
<dbReference type="InterPro" id="IPR001412">
    <property type="entry name" value="aa-tRNA-synth_I_CS"/>
</dbReference>
<dbReference type="InterPro" id="IPR002300">
    <property type="entry name" value="aa-tRNA-synth_Ia"/>
</dbReference>
<dbReference type="InterPro" id="IPR002302">
    <property type="entry name" value="Leu-tRNA-ligase"/>
</dbReference>
<dbReference type="InterPro" id="IPR025709">
    <property type="entry name" value="Leu_tRNA-synth_edit"/>
</dbReference>
<dbReference type="InterPro" id="IPR013155">
    <property type="entry name" value="M/V/L/I-tRNA-synth_anticd-bd"/>
</dbReference>
<dbReference type="InterPro" id="IPR014729">
    <property type="entry name" value="Rossmann-like_a/b/a_fold"/>
</dbReference>
<dbReference type="InterPro" id="IPR009080">
    <property type="entry name" value="tRNAsynth_Ia_anticodon-bd"/>
</dbReference>
<dbReference type="InterPro" id="IPR009008">
    <property type="entry name" value="Val/Leu/Ile-tRNA-synth_edit"/>
</dbReference>
<dbReference type="NCBIfam" id="TIGR00396">
    <property type="entry name" value="leuS_bact"/>
    <property type="match status" value="1"/>
</dbReference>
<dbReference type="PANTHER" id="PTHR43740:SF2">
    <property type="entry name" value="LEUCINE--TRNA LIGASE, MITOCHONDRIAL"/>
    <property type="match status" value="1"/>
</dbReference>
<dbReference type="PANTHER" id="PTHR43740">
    <property type="entry name" value="LEUCYL-TRNA SYNTHETASE"/>
    <property type="match status" value="1"/>
</dbReference>
<dbReference type="Pfam" id="PF08264">
    <property type="entry name" value="Anticodon_1"/>
    <property type="match status" value="1"/>
</dbReference>
<dbReference type="Pfam" id="PF00133">
    <property type="entry name" value="tRNA-synt_1"/>
    <property type="match status" value="3"/>
</dbReference>
<dbReference type="Pfam" id="PF13603">
    <property type="entry name" value="tRNA-synt_1_2"/>
    <property type="match status" value="1"/>
</dbReference>
<dbReference type="PRINTS" id="PR00985">
    <property type="entry name" value="TRNASYNTHLEU"/>
</dbReference>
<dbReference type="SUPFAM" id="SSF47323">
    <property type="entry name" value="Anticodon-binding domain of a subclass of class I aminoacyl-tRNA synthetases"/>
    <property type="match status" value="1"/>
</dbReference>
<dbReference type="SUPFAM" id="SSF52374">
    <property type="entry name" value="Nucleotidylyl transferase"/>
    <property type="match status" value="1"/>
</dbReference>
<dbReference type="SUPFAM" id="SSF50677">
    <property type="entry name" value="ValRS/IleRS/LeuRS editing domain"/>
    <property type="match status" value="1"/>
</dbReference>
<dbReference type="PROSITE" id="PS00178">
    <property type="entry name" value="AA_TRNA_LIGASE_I"/>
    <property type="match status" value="1"/>
</dbReference>
<evidence type="ECO:0000255" key="1">
    <source>
        <dbReference type="HAMAP-Rule" id="MF_00049"/>
    </source>
</evidence>
<protein>
    <recommendedName>
        <fullName evidence="1">Leucine--tRNA ligase</fullName>
        <ecNumber evidence="1">6.1.1.4</ecNumber>
    </recommendedName>
    <alternativeName>
        <fullName evidence="1">Leucyl-tRNA synthetase</fullName>
        <shortName evidence="1">LeuRS</shortName>
    </alternativeName>
</protein>
<proteinExistence type="inferred from homology"/>
<reference key="1">
    <citation type="journal article" date="2002" name="Nature">
        <title>Genome sequence of the plant pathogen Ralstonia solanacearum.</title>
        <authorList>
            <person name="Salanoubat M."/>
            <person name="Genin S."/>
            <person name="Artiguenave F."/>
            <person name="Gouzy J."/>
            <person name="Mangenot S."/>
            <person name="Arlat M."/>
            <person name="Billault A."/>
            <person name="Brottier P."/>
            <person name="Camus J.-C."/>
            <person name="Cattolico L."/>
            <person name="Chandler M."/>
            <person name="Choisne N."/>
            <person name="Claudel-Renard C."/>
            <person name="Cunnac S."/>
            <person name="Demange N."/>
            <person name="Gaspin C."/>
            <person name="Lavie M."/>
            <person name="Moisan A."/>
            <person name="Robert C."/>
            <person name="Saurin W."/>
            <person name="Schiex T."/>
            <person name="Siguier P."/>
            <person name="Thebault P."/>
            <person name="Whalen M."/>
            <person name="Wincker P."/>
            <person name="Levy M."/>
            <person name="Weissenbach J."/>
            <person name="Boucher C.A."/>
        </authorList>
    </citation>
    <scope>NUCLEOTIDE SEQUENCE [LARGE SCALE GENOMIC DNA]</scope>
    <source>
        <strain>ATCC BAA-1114 / GMI1000</strain>
    </source>
</reference>
<keyword id="KW-0030">Aminoacyl-tRNA synthetase</keyword>
<keyword id="KW-0067">ATP-binding</keyword>
<keyword id="KW-0963">Cytoplasm</keyword>
<keyword id="KW-0436">Ligase</keyword>
<keyword id="KW-0547">Nucleotide-binding</keyword>
<keyword id="KW-0648">Protein biosynthesis</keyword>
<keyword id="KW-1185">Reference proteome</keyword>
<organism>
    <name type="scientific">Ralstonia nicotianae (strain ATCC BAA-1114 / GMI1000)</name>
    <name type="common">Ralstonia solanacearum</name>
    <dbReference type="NCBI Taxonomy" id="267608"/>
    <lineage>
        <taxon>Bacteria</taxon>
        <taxon>Pseudomonadati</taxon>
        <taxon>Pseudomonadota</taxon>
        <taxon>Betaproteobacteria</taxon>
        <taxon>Burkholderiales</taxon>
        <taxon>Burkholderiaceae</taxon>
        <taxon>Ralstonia</taxon>
        <taxon>Ralstonia solanacearum species complex</taxon>
    </lineage>
</organism>
<comment type="catalytic activity">
    <reaction evidence="1">
        <text>tRNA(Leu) + L-leucine + ATP = L-leucyl-tRNA(Leu) + AMP + diphosphate</text>
        <dbReference type="Rhea" id="RHEA:11688"/>
        <dbReference type="Rhea" id="RHEA-COMP:9613"/>
        <dbReference type="Rhea" id="RHEA-COMP:9622"/>
        <dbReference type="ChEBI" id="CHEBI:30616"/>
        <dbReference type="ChEBI" id="CHEBI:33019"/>
        <dbReference type="ChEBI" id="CHEBI:57427"/>
        <dbReference type="ChEBI" id="CHEBI:78442"/>
        <dbReference type="ChEBI" id="CHEBI:78494"/>
        <dbReference type="ChEBI" id="CHEBI:456215"/>
        <dbReference type="EC" id="6.1.1.4"/>
    </reaction>
</comment>
<comment type="subcellular location">
    <subcellularLocation>
        <location evidence="1">Cytoplasm</location>
    </subcellularLocation>
</comment>
<comment type="similarity">
    <text evidence="1">Belongs to the class-I aminoacyl-tRNA synthetase family.</text>
</comment>
<feature type="chain" id="PRO_0000152069" description="Leucine--tRNA ligase">
    <location>
        <begin position="1"/>
        <end position="877"/>
    </location>
</feature>
<feature type="short sequence motif" description="'HIGH' region">
    <location>
        <begin position="48"/>
        <end position="58"/>
    </location>
</feature>
<feature type="short sequence motif" description="'KMSKS' region">
    <location>
        <begin position="636"/>
        <end position="640"/>
    </location>
</feature>
<feature type="binding site" evidence="1">
    <location>
        <position position="639"/>
    </location>
    <ligand>
        <name>ATP</name>
        <dbReference type="ChEBI" id="CHEBI:30616"/>
    </ligand>
</feature>
<name>SYL_RALN1</name>
<accession>Q8XVT3</accession>
<sequence>MQDKYSPSEVEQQAQQHWQAQDAYRVTEHARAADGSDKPKFYACSMLPYPSGKLHMGHVRNYTINDVMMRQLRMKGYNVLMPMGWDAFGMPAENAALNNGVAPAAWTYDNIAYMKKQMQSMGLAIDWSREVATCSPDYYKWNQWLFLKMLEKGIAYRKTGTVNWDPIDQTVLANEQVIDGRGWRSGAVVEKREIPMYYLRITDYAQELLSDLDPLGWPERVKLMQQNWIGKSEGVRFAFPHGIPGDDGKVIGDGKLYVFTTRADTIMGVTFCAVAAEHPIAAHAAQGNPALAAFIDECKHGSVMEADMATMEKKGMPTGLTVTHPLTGEAVPVWVGNYVLMTYGDGAVMGVPAHDERDFAFANKYGLAIKQVIDVKGQPFGTEAWQEWYADKERGVLVHSGKYDGLDYRQAVDAVAADLAAQGLGEKKTTWRLRDWGISRQRYWGTPIPLIHCDSCGVVPVPEQDLPVRLPEDLVPDGSGNPLAKDARFLECTCPSCGKPARRETDTMDTFIDSCWYYMRYTCPDGATMVDGRNDYWMPMDQYIGGIEHAILHLLYARFWTKVMRDLGLVKFDEPFTKLLTQGMVLNETYYREDAAGKKQWINPADVDVQTDDRGRPIGATLKADGQPVVIGGVEKMSKSKNNGIDPQALIDQYGADTARLFTMFAAPPEQQLEWSDAGVEGASRFLRRAWNFGVAHAESIRAGHGNGVVNGATDADRALRRELHTVLKQANYDYERLQYNTVVSAAMKMLNALEGAKDAGADARREGLGILLRVLYPVVPHITHVLWQELGYAGAYGGLLDAPWPQVDEGALVQSEIELVLQVNGKVRGSIVVPADADRAAIEAIAAKDEAVHRFAEGKPPKKIIVVPGRLVNVVA</sequence>